<proteinExistence type="inferred from homology"/>
<organism>
    <name type="scientific">Methanothermobacter thermautotrophicus (strain ATCC 29096 / DSM 1053 / JCM 10044 / NBRC 100330 / Delta H)</name>
    <name type="common">Methanobacterium thermoautotrophicum</name>
    <dbReference type="NCBI Taxonomy" id="187420"/>
    <lineage>
        <taxon>Archaea</taxon>
        <taxon>Methanobacteriati</taxon>
        <taxon>Methanobacteriota</taxon>
        <taxon>Methanomada group</taxon>
        <taxon>Methanobacteria</taxon>
        <taxon>Methanobacteriales</taxon>
        <taxon>Methanobacteriaceae</taxon>
        <taxon>Methanothermobacter</taxon>
    </lineage>
</organism>
<feature type="chain" id="PRO_0000122313" description="5'-deoxyadenosine deaminase">
    <location>
        <begin position="1"/>
        <end position="427"/>
    </location>
</feature>
<feature type="binding site" evidence="1">
    <location>
        <position position="62"/>
    </location>
    <ligand>
        <name>Zn(2+)</name>
        <dbReference type="ChEBI" id="CHEBI:29105"/>
    </ligand>
</feature>
<feature type="binding site" evidence="1">
    <location>
        <position position="64"/>
    </location>
    <ligand>
        <name>Zn(2+)</name>
        <dbReference type="ChEBI" id="CHEBI:29105"/>
    </ligand>
</feature>
<feature type="binding site" evidence="1">
    <location>
        <position position="91"/>
    </location>
    <ligand>
        <name>substrate</name>
    </ligand>
</feature>
<feature type="binding site" evidence="1">
    <location>
        <position position="183"/>
    </location>
    <ligand>
        <name>substrate</name>
    </ligand>
</feature>
<feature type="binding site" evidence="1">
    <location>
        <position position="210"/>
    </location>
    <ligand>
        <name>Zn(2+)</name>
        <dbReference type="ChEBI" id="CHEBI:29105"/>
    </ligand>
</feature>
<feature type="binding site" evidence="1">
    <location>
        <position position="213"/>
    </location>
    <ligand>
        <name>substrate</name>
    </ligand>
</feature>
<feature type="binding site" evidence="1">
    <location>
        <position position="298"/>
    </location>
    <ligand>
        <name>substrate</name>
    </ligand>
</feature>
<feature type="binding site" evidence="1">
    <location>
        <position position="298"/>
    </location>
    <ligand>
        <name>Zn(2+)</name>
        <dbReference type="ChEBI" id="CHEBI:29105"/>
    </ligand>
</feature>
<gene>
    <name evidence="1" type="primary">dadD</name>
    <name type="ordered locus">MTH_1505</name>
</gene>
<dbReference type="EC" id="3.5.4.41" evidence="1"/>
<dbReference type="EC" id="3.5.4.31" evidence="1"/>
<dbReference type="EC" id="3.5.4.4" evidence="1"/>
<dbReference type="EC" id="3.5.4.28" evidence="1"/>
<dbReference type="EMBL" id="AE000666">
    <property type="protein sequence ID" value="AAB85980.1"/>
    <property type="molecule type" value="Genomic_DNA"/>
</dbReference>
<dbReference type="PIR" id="G69067">
    <property type="entry name" value="G69067"/>
</dbReference>
<dbReference type="RefSeq" id="WP_010877115.1">
    <property type="nucleotide sequence ID" value="NC_000916.1"/>
</dbReference>
<dbReference type="SMR" id="O27549"/>
<dbReference type="FunCoup" id="O27549">
    <property type="interactions" value="30"/>
</dbReference>
<dbReference type="STRING" id="187420.MTH_1505"/>
<dbReference type="PaxDb" id="187420-MTH_1505"/>
<dbReference type="EnsemblBacteria" id="AAB85980">
    <property type="protein sequence ID" value="AAB85980"/>
    <property type="gene ID" value="MTH_1505"/>
</dbReference>
<dbReference type="GeneID" id="1471774"/>
<dbReference type="KEGG" id="mth:MTH_1505"/>
<dbReference type="PATRIC" id="fig|187420.15.peg.1468"/>
<dbReference type="HOGENOM" id="CLU_012358_2_1_2"/>
<dbReference type="InParanoid" id="O27549"/>
<dbReference type="UniPathway" id="UPA00315"/>
<dbReference type="Proteomes" id="UP000005223">
    <property type="component" value="Chromosome"/>
</dbReference>
<dbReference type="GO" id="GO:0090613">
    <property type="term" value="F:5'-deoxyadenosine deaminase activity"/>
    <property type="evidence" value="ECO:0007669"/>
    <property type="project" value="UniProtKB-UniRule"/>
</dbReference>
<dbReference type="GO" id="GO:0090614">
    <property type="term" value="F:5'-methylthioadenosine deaminase activity"/>
    <property type="evidence" value="ECO:0007669"/>
    <property type="project" value="UniProtKB-EC"/>
</dbReference>
<dbReference type="GO" id="GO:0004000">
    <property type="term" value="F:adenosine deaminase activity"/>
    <property type="evidence" value="ECO:0007669"/>
    <property type="project" value="UniProtKB-UniRule"/>
</dbReference>
<dbReference type="GO" id="GO:0046872">
    <property type="term" value="F:metal ion binding"/>
    <property type="evidence" value="ECO:0007669"/>
    <property type="project" value="UniProtKB-KW"/>
</dbReference>
<dbReference type="GO" id="GO:0050270">
    <property type="term" value="F:S-adenosylhomocysteine deaminase activity"/>
    <property type="evidence" value="ECO:0007669"/>
    <property type="project" value="UniProtKB-EC"/>
</dbReference>
<dbReference type="GO" id="GO:0006556">
    <property type="term" value="P:S-adenosylmethionine biosynthetic process"/>
    <property type="evidence" value="ECO:0007669"/>
    <property type="project" value="UniProtKB-UniRule"/>
</dbReference>
<dbReference type="CDD" id="cd01298">
    <property type="entry name" value="ATZ_TRZ_like"/>
    <property type="match status" value="1"/>
</dbReference>
<dbReference type="FunFam" id="3.20.20.140:FF:000014">
    <property type="entry name" value="5-methylthioadenosine/S-adenosylhomocysteine deaminase"/>
    <property type="match status" value="1"/>
</dbReference>
<dbReference type="Gene3D" id="3.20.20.140">
    <property type="entry name" value="Metal-dependent hydrolases"/>
    <property type="match status" value="1"/>
</dbReference>
<dbReference type="Gene3D" id="2.30.40.10">
    <property type="entry name" value="Urease, subunit C, domain 1"/>
    <property type="match status" value="1"/>
</dbReference>
<dbReference type="HAMAP" id="MF_01281">
    <property type="entry name" value="MTA_SAH_deamin"/>
    <property type="match status" value="1"/>
</dbReference>
<dbReference type="InterPro" id="IPR006680">
    <property type="entry name" value="Amidohydro-rel"/>
</dbReference>
<dbReference type="InterPro" id="IPR023512">
    <property type="entry name" value="Deaminase_MtaD/DadD"/>
</dbReference>
<dbReference type="InterPro" id="IPR011059">
    <property type="entry name" value="Metal-dep_hydrolase_composite"/>
</dbReference>
<dbReference type="InterPro" id="IPR032466">
    <property type="entry name" value="Metal_Hydrolase"/>
</dbReference>
<dbReference type="InterPro" id="IPR050287">
    <property type="entry name" value="MTA/SAH_deaminase"/>
</dbReference>
<dbReference type="NCBIfam" id="NF004701">
    <property type="entry name" value="PRK06038.1"/>
    <property type="match status" value="1"/>
</dbReference>
<dbReference type="PANTHER" id="PTHR43794:SF11">
    <property type="entry name" value="AMIDOHYDROLASE-RELATED DOMAIN-CONTAINING PROTEIN"/>
    <property type="match status" value="1"/>
</dbReference>
<dbReference type="PANTHER" id="PTHR43794">
    <property type="entry name" value="AMINOHYDROLASE SSNA-RELATED"/>
    <property type="match status" value="1"/>
</dbReference>
<dbReference type="Pfam" id="PF01979">
    <property type="entry name" value="Amidohydro_1"/>
    <property type="match status" value="1"/>
</dbReference>
<dbReference type="SUPFAM" id="SSF51338">
    <property type="entry name" value="Composite domain of metallo-dependent hydrolases"/>
    <property type="match status" value="1"/>
</dbReference>
<dbReference type="SUPFAM" id="SSF51556">
    <property type="entry name" value="Metallo-dependent hydrolases"/>
    <property type="match status" value="1"/>
</dbReference>
<name>DADD_METTH</name>
<evidence type="ECO:0000255" key="1">
    <source>
        <dbReference type="HAMAP-Rule" id="MF_01281"/>
    </source>
</evidence>
<keyword id="KW-0378">Hydrolase</keyword>
<keyword id="KW-0479">Metal-binding</keyword>
<keyword id="KW-1185">Reference proteome</keyword>
<keyword id="KW-0862">Zinc</keyword>
<accession>O27549</accession>
<reference key="1">
    <citation type="journal article" date="1997" name="J. Bacteriol.">
        <title>Complete genome sequence of Methanobacterium thermoautotrophicum deltaH: functional analysis and comparative genomics.</title>
        <authorList>
            <person name="Smith D.R."/>
            <person name="Doucette-Stamm L.A."/>
            <person name="Deloughery C."/>
            <person name="Lee H.-M."/>
            <person name="Dubois J."/>
            <person name="Aldredge T."/>
            <person name="Bashirzadeh R."/>
            <person name="Blakely D."/>
            <person name="Cook R."/>
            <person name="Gilbert K."/>
            <person name="Harrison D."/>
            <person name="Hoang L."/>
            <person name="Keagle P."/>
            <person name="Lumm W."/>
            <person name="Pothier B."/>
            <person name="Qiu D."/>
            <person name="Spadafora R."/>
            <person name="Vicare R."/>
            <person name="Wang Y."/>
            <person name="Wierzbowski J."/>
            <person name="Gibson R."/>
            <person name="Jiwani N."/>
            <person name="Caruso A."/>
            <person name="Bush D."/>
            <person name="Safer H."/>
            <person name="Patwell D."/>
            <person name="Prabhakar S."/>
            <person name="McDougall S."/>
            <person name="Shimer G."/>
            <person name="Goyal A."/>
            <person name="Pietrovski S."/>
            <person name="Church G.M."/>
            <person name="Daniels C.J."/>
            <person name="Mao J.-I."/>
            <person name="Rice P."/>
            <person name="Noelling J."/>
            <person name="Reeve J.N."/>
        </authorList>
    </citation>
    <scope>NUCLEOTIDE SEQUENCE [LARGE SCALE GENOMIC DNA]</scope>
    <source>
        <strain>ATCC 29096 / DSM 1053 / JCM 10044 / NBRC 100330 / Delta H</strain>
    </source>
</reference>
<sequence length="427" mass="46442">MDNESILITGPEILDAGGIRRGSVLIEDNRIADVSNTLSPGDADTVIDGTGKLLIPGLVNTHTHLSMTLFRGIADDLPLDRWLNDHIWPAEARLNGDYCYAGALLGCIEMIRSGTTSFNDMYFYMDHVARAVEEAGLRCVISHGMIDLGDTEKMTAELRESRRIIKECHGMADDRIRVALGPHSPYTCSEELLKETAALADKNDLMIHIHVSETENEVSEVSRSHGMTPVEYLDEVGVLGPRTVAAHCVWLKDWEIDVLAERDVKVSHNPSSNMKLASGVSPVARLLQRGVNVSLGTDGAASNNNLDMFQEMKTASLLQKVNLEDPTALPAMDVFSMATLNGARALGIDAGLIAPGKLADIVILNTRRPHLTPWRNPPSHTVYSASGADVDTVICDGRILLRDGELEVLEEKYVMELAEAAAAELTG</sequence>
<comment type="function">
    <text evidence="1">Catalyzes the deamination of three SAM-derived enzymatic products, namely 5'-deoxyadenosine, S-adenosyl-L-homocysteine, and 5'-methylthioadenosine, to produce the inosine analogs. Can also deaminate adenosine. The preferred substrate for this enzyme is 5'-deoxyadenosine, but all these substrates are efficiently deaminated. Likely functions in a S-adenosyl-L-methionine (SAM) recycling pathway from S-adenosyl-L-homocysteine (SAH) produced from SAM-dependent methylation reactions. May also be involved in the recycling of 5'-deoxyadenosine, whereupon the 5'-deoxyribose moiety of 5'-deoxyinosine is further metabolized to deoxyhexoses used for the biosynthesis of aromatic amino acids in methanogens.</text>
</comment>
<comment type="catalytic activity">
    <reaction evidence="1">
        <text>5'-deoxyadenosine + H2O + H(+) = 5'-deoxyinosine + NH4(+)</text>
        <dbReference type="Rhea" id="RHEA:42892"/>
        <dbReference type="ChEBI" id="CHEBI:15377"/>
        <dbReference type="ChEBI" id="CHEBI:15378"/>
        <dbReference type="ChEBI" id="CHEBI:17319"/>
        <dbReference type="ChEBI" id="CHEBI:28938"/>
        <dbReference type="ChEBI" id="CHEBI:82775"/>
        <dbReference type="EC" id="3.5.4.41"/>
    </reaction>
    <physiologicalReaction direction="left-to-right" evidence="1">
        <dbReference type="Rhea" id="RHEA:42893"/>
    </physiologicalReaction>
</comment>
<comment type="catalytic activity">
    <reaction evidence="1">
        <text>S-adenosyl-L-homocysteine + H2O + H(+) = S-inosyl-L-homocysteine + NH4(+)</text>
        <dbReference type="Rhea" id="RHEA:20716"/>
        <dbReference type="ChEBI" id="CHEBI:15377"/>
        <dbReference type="ChEBI" id="CHEBI:15378"/>
        <dbReference type="ChEBI" id="CHEBI:28938"/>
        <dbReference type="ChEBI" id="CHEBI:57856"/>
        <dbReference type="ChEBI" id="CHEBI:57985"/>
        <dbReference type="EC" id="3.5.4.28"/>
    </reaction>
    <physiologicalReaction direction="left-to-right" evidence="1">
        <dbReference type="Rhea" id="RHEA:20717"/>
    </physiologicalReaction>
</comment>
<comment type="catalytic activity">
    <reaction evidence="1">
        <text>S-methyl-5'-thioadenosine + H2O + H(+) = S-methyl-5'-thioinosine + NH4(+)</text>
        <dbReference type="Rhea" id="RHEA:25025"/>
        <dbReference type="ChEBI" id="CHEBI:15377"/>
        <dbReference type="ChEBI" id="CHEBI:15378"/>
        <dbReference type="ChEBI" id="CHEBI:17509"/>
        <dbReference type="ChEBI" id="CHEBI:28938"/>
        <dbReference type="ChEBI" id="CHEBI:48595"/>
        <dbReference type="EC" id="3.5.4.31"/>
    </reaction>
    <physiologicalReaction direction="left-to-right" evidence="1">
        <dbReference type="Rhea" id="RHEA:25026"/>
    </physiologicalReaction>
</comment>
<comment type="catalytic activity">
    <reaction evidence="1">
        <text>adenosine + H2O + H(+) = inosine + NH4(+)</text>
        <dbReference type="Rhea" id="RHEA:24408"/>
        <dbReference type="ChEBI" id="CHEBI:15377"/>
        <dbReference type="ChEBI" id="CHEBI:15378"/>
        <dbReference type="ChEBI" id="CHEBI:16335"/>
        <dbReference type="ChEBI" id="CHEBI:17596"/>
        <dbReference type="ChEBI" id="CHEBI:28938"/>
        <dbReference type="EC" id="3.5.4.4"/>
    </reaction>
    <physiologicalReaction direction="left-to-right" evidence="1">
        <dbReference type="Rhea" id="RHEA:24409"/>
    </physiologicalReaction>
</comment>
<comment type="cofactor">
    <cofactor evidence="1">
        <name>Zn(2+)</name>
        <dbReference type="ChEBI" id="CHEBI:29105"/>
    </cofactor>
    <text evidence="1">Binds 1 zinc ion per subunit.</text>
</comment>
<comment type="pathway">
    <text evidence="1">Amino-acid biosynthesis; S-adenosyl-L-methionine biosynthesis.</text>
</comment>
<comment type="subunit">
    <text evidence="1">Homotetramer.</text>
</comment>
<comment type="miscellaneous">
    <text evidence="1">SAH is a product of SAM methyltransferases and is known to be a feedback inhibitor of these enzymes. As a result of this inhibition, organisms have evolved efficient enzymes to metabolize SAH via different pathways. The pathway found in methanogens differs from the canonical pathway, it uses the deamination of S-adenosyl-L-homocysteine to form S-inosyl-L-homocysteine for the regeneration of SAM from S-adenosyl-L-homocysteine. 5'-deoxyadenosine is a radical SAM enzyme reaction product which strongly inhibits radical SAM enzymes. A pathway for removing this product must be present in methanogens where the MTA/SAH nucleosidase which normally metabolizes this compound is absent.</text>
</comment>
<comment type="similarity">
    <text evidence="1">Belongs to the metallo-dependent hydrolases superfamily. MTA/SAH deaminase family.</text>
</comment>
<protein>
    <recommendedName>
        <fullName evidence="1">5'-deoxyadenosine deaminase</fullName>
        <shortName evidence="1">5'-dA deaminase</shortName>
        <ecNumber evidence="1">3.5.4.41</ecNumber>
    </recommendedName>
    <alternativeName>
        <fullName evidence="1">5'-methylthioadenosine deaminase</fullName>
        <shortName evidence="1">MTA deaminase</shortName>
        <ecNumber evidence="1">3.5.4.31</ecNumber>
    </alternativeName>
    <alternativeName>
        <fullName evidence="1">Adenosine deaminase</fullName>
        <ecNumber evidence="1">3.5.4.4</ecNumber>
    </alternativeName>
    <alternativeName>
        <fullName evidence="1">S-adenosylhomocysteine deaminase</fullName>
        <shortName evidence="1">SAH deaminase</shortName>
        <ecNumber evidence="1">3.5.4.28</ecNumber>
    </alternativeName>
</protein>